<sequence length="364" mass="39649">MRTDLFDFHLPPENIALRPASPREAARMLVVQGDGVLRDRTIGDLPDWLEPGDQLVVNDTKVIAAQLSGRRISRETEAKIEATLIKRLDGSRWQALVRPAKKLLAGDTIRFGNEGKVCLLGHLDATVEAKGEEGEVTLSFVFHGPALDQAIADLGRPPLPPYIAGKRPADEQDAQDYQTMFAAKEGAVAAPTAGLHFTPALEQRLRARGVGLQRVTLHVGAGTFLPVKVEDTEGHRMHAEWGSLTPETAAALNQAKAEGGRIVAVGTTSMRLLESAALPDGTIAPFEAETSIFITPGYRFRAVDILMTNFHLPRSTLFMLVSAFAGLETMQAAYAHAIESGYRFYSYGDACLLFRQPDERVVEP</sequence>
<keyword id="KW-0963">Cytoplasm</keyword>
<keyword id="KW-0671">Queuosine biosynthesis</keyword>
<keyword id="KW-1185">Reference proteome</keyword>
<keyword id="KW-0949">S-adenosyl-L-methionine</keyword>
<keyword id="KW-0808">Transferase</keyword>
<name>QUEA_BRASO</name>
<organism>
    <name type="scientific">Bradyrhizobium sp. (strain ORS 278)</name>
    <dbReference type="NCBI Taxonomy" id="114615"/>
    <lineage>
        <taxon>Bacteria</taxon>
        <taxon>Pseudomonadati</taxon>
        <taxon>Pseudomonadota</taxon>
        <taxon>Alphaproteobacteria</taxon>
        <taxon>Hyphomicrobiales</taxon>
        <taxon>Nitrobacteraceae</taxon>
        <taxon>Bradyrhizobium</taxon>
    </lineage>
</organism>
<comment type="function">
    <text evidence="1">Transfers and isomerizes the ribose moiety from AdoMet to the 7-aminomethyl group of 7-deazaguanine (preQ1-tRNA) to give epoxyqueuosine (oQ-tRNA).</text>
</comment>
<comment type="catalytic activity">
    <reaction evidence="1">
        <text>7-aminomethyl-7-carbaguanosine(34) in tRNA + S-adenosyl-L-methionine = epoxyqueuosine(34) in tRNA + adenine + L-methionine + 2 H(+)</text>
        <dbReference type="Rhea" id="RHEA:32155"/>
        <dbReference type="Rhea" id="RHEA-COMP:10342"/>
        <dbReference type="Rhea" id="RHEA-COMP:18582"/>
        <dbReference type="ChEBI" id="CHEBI:15378"/>
        <dbReference type="ChEBI" id="CHEBI:16708"/>
        <dbReference type="ChEBI" id="CHEBI:57844"/>
        <dbReference type="ChEBI" id="CHEBI:59789"/>
        <dbReference type="ChEBI" id="CHEBI:82833"/>
        <dbReference type="ChEBI" id="CHEBI:194443"/>
        <dbReference type="EC" id="2.4.99.17"/>
    </reaction>
</comment>
<comment type="pathway">
    <text evidence="1">tRNA modification; tRNA-queuosine biosynthesis.</text>
</comment>
<comment type="subunit">
    <text evidence="1">Monomer.</text>
</comment>
<comment type="subcellular location">
    <subcellularLocation>
        <location evidence="1">Cytoplasm</location>
    </subcellularLocation>
</comment>
<comment type="similarity">
    <text evidence="1">Belongs to the QueA family.</text>
</comment>
<gene>
    <name evidence="1" type="primary">queA</name>
    <name type="ordered locus">BRADO3993</name>
</gene>
<feature type="chain" id="PRO_1000015183" description="S-adenosylmethionine:tRNA ribosyltransferase-isomerase">
    <location>
        <begin position="1"/>
        <end position="364"/>
    </location>
</feature>
<reference key="1">
    <citation type="journal article" date="2007" name="Science">
        <title>Legumes symbioses: absence of nod genes in photosynthetic bradyrhizobia.</title>
        <authorList>
            <person name="Giraud E."/>
            <person name="Moulin L."/>
            <person name="Vallenet D."/>
            <person name="Barbe V."/>
            <person name="Cytryn E."/>
            <person name="Avarre J.-C."/>
            <person name="Jaubert M."/>
            <person name="Simon D."/>
            <person name="Cartieaux F."/>
            <person name="Prin Y."/>
            <person name="Bena G."/>
            <person name="Hannibal L."/>
            <person name="Fardoux J."/>
            <person name="Kojadinovic M."/>
            <person name="Vuillet L."/>
            <person name="Lajus A."/>
            <person name="Cruveiller S."/>
            <person name="Rouy Z."/>
            <person name="Mangenot S."/>
            <person name="Segurens B."/>
            <person name="Dossat C."/>
            <person name="Franck W.L."/>
            <person name="Chang W.-S."/>
            <person name="Saunders E."/>
            <person name="Bruce D."/>
            <person name="Richardson P."/>
            <person name="Normand P."/>
            <person name="Dreyfus B."/>
            <person name="Pignol D."/>
            <person name="Stacey G."/>
            <person name="Emerich D."/>
            <person name="Vermeglio A."/>
            <person name="Medigue C."/>
            <person name="Sadowsky M."/>
        </authorList>
    </citation>
    <scope>NUCLEOTIDE SEQUENCE [LARGE SCALE GENOMIC DNA]</scope>
    <source>
        <strain>ORS 278</strain>
    </source>
</reference>
<accession>A4YV19</accession>
<evidence type="ECO:0000255" key="1">
    <source>
        <dbReference type="HAMAP-Rule" id="MF_00113"/>
    </source>
</evidence>
<protein>
    <recommendedName>
        <fullName evidence="1">S-adenosylmethionine:tRNA ribosyltransferase-isomerase</fullName>
        <ecNumber evidence="1">2.4.99.17</ecNumber>
    </recommendedName>
    <alternativeName>
        <fullName evidence="1">Queuosine biosynthesis protein QueA</fullName>
    </alternativeName>
</protein>
<dbReference type="EC" id="2.4.99.17" evidence="1"/>
<dbReference type="EMBL" id="CU234118">
    <property type="protein sequence ID" value="CAL77745.1"/>
    <property type="molecule type" value="Genomic_DNA"/>
</dbReference>
<dbReference type="RefSeq" id="WP_011926880.1">
    <property type="nucleotide sequence ID" value="NC_009445.1"/>
</dbReference>
<dbReference type="SMR" id="A4YV19"/>
<dbReference type="STRING" id="114615.BRADO3993"/>
<dbReference type="KEGG" id="bra:BRADO3993"/>
<dbReference type="eggNOG" id="COG0809">
    <property type="taxonomic scope" value="Bacteria"/>
</dbReference>
<dbReference type="HOGENOM" id="CLU_039110_1_1_5"/>
<dbReference type="OrthoDB" id="9805933at2"/>
<dbReference type="UniPathway" id="UPA00392"/>
<dbReference type="Proteomes" id="UP000001994">
    <property type="component" value="Chromosome"/>
</dbReference>
<dbReference type="GO" id="GO:0005737">
    <property type="term" value="C:cytoplasm"/>
    <property type="evidence" value="ECO:0007669"/>
    <property type="project" value="UniProtKB-SubCell"/>
</dbReference>
<dbReference type="GO" id="GO:0051075">
    <property type="term" value="F:S-adenosylmethionine:tRNA ribosyltransferase-isomerase activity"/>
    <property type="evidence" value="ECO:0007669"/>
    <property type="project" value="UniProtKB-EC"/>
</dbReference>
<dbReference type="GO" id="GO:0008616">
    <property type="term" value="P:queuosine biosynthetic process"/>
    <property type="evidence" value="ECO:0007669"/>
    <property type="project" value="UniProtKB-UniRule"/>
</dbReference>
<dbReference type="GO" id="GO:0002099">
    <property type="term" value="P:tRNA wobble guanine modification"/>
    <property type="evidence" value="ECO:0007669"/>
    <property type="project" value="TreeGrafter"/>
</dbReference>
<dbReference type="FunFam" id="3.40.1780.10:FF:000001">
    <property type="entry name" value="S-adenosylmethionine:tRNA ribosyltransferase-isomerase"/>
    <property type="match status" value="1"/>
</dbReference>
<dbReference type="Gene3D" id="2.40.10.240">
    <property type="entry name" value="QueA-like"/>
    <property type="match status" value="1"/>
</dbReference>
<dbReference type="Gene3D" id="3.40.1780.10">
    <property type="entry name" value="QueA-like"/>
    <property type="match status" value="1"/>
</dbReference>
<dbReference type="HAMAP" id="MF_00113">
    <property type="entry name" value="QueA"/>
    <property type="match status" value="1"/>
</dbReference>
<dbReference type="InterPro" id="IPR003699">
    <property type="entry name" value="QueA"/>
</dbReference>
<dbReference type="InterPro" id="IPR042118">
    <property type="entry name" value="QueA_dom1"/>
</dbReference>
<dbReference type="InterPro" id="IPR042119">
    <property type="entry name" value="QueA_dom2"/>
</dbReference>
<dbReference type="InterPro" id="IPR036100">
    <property type="entry name" value="QueA_sf"/>
</dbReference>
<dbReference type="NCBIfam" id="NF001140">
    <property type="entry name" value="PRK00147.1"/>
    <property type="match status" value="1"/>
</dbReference>
<dbReference type="NCBIfam" id="TIGR00113">
    <property type="entry name" value="queA"/>
    <property type="match status" value="1"/>
</dbReference>
<dbReference type="PANTHER" id="PTHR30307">
    <property type="entry name" value="S-ADENOSYLMETHIONINE:TRNA RIBOSYLTRANSFERASE-ISOMERASE"/>
    <property type="match status" value="1"/>
</dbReference>
<dbReference type="PANTHER" id="PTHR30307:SF0">
    <property type="entry name" value="S-ADENOSYLMETHIONINE:TRNA RIBOSYLTRANSFERASE-ISOMERASE"/>
    <property type="match status" value="1"/>
</dbReference>
<dbReference type="Pfam" id="PF02547">
    <property type="entry name" value="Queuosine_synth"/>
    <property type="match status" value="1"/>
</dbReference>
<dbReference type="SUPFAM" id="SSF111337">
    <property type="entry name" value="QueA-like"/>
    <property type="match status" value="1"/>
</dbReference>
<proteinExistence type="inferred from homology"/>